<keyword id="KW-0341">Growth regulation</keyword>
<keyword id="KW-0597">Phosphoprotein</keyword>
<keyword id="KW-1185">Reference proteome</keyword>
<keyword id="KW-0727">SH2 domain</keyword>
<keyword id="KW-0734">Signal transduction inhibitor</keyword>
<keyword id="KW-0833">Ubl conjugation pathway</keyword>
<feature type="chain" id="PRO_0000181242" description="Suppressor of cytokine signaling 3">
    <location>
        <begin position="1"/>
        <end position="225"/>
    </location>
</feature>
<feature type="domain" description="SH2" evidence="4">
    <location>
        <begin position="46"/>
        <end position="142"/>
    </location>
</feature>
<feature type="domain" description="SOCS box" evidence="5">
    <location>
        <begin position="177"/>
        <end position="224"/>
    </location>
</feature>
<feature type="region of interest" description="Kinase inhibitory region (KIR)">
    <location>
        <begin position="22"/>
        <end position="33"/>
    </location>
</feature>
<feature type="region of interest" description="Extended SH2 subdomain (ESS)">
    <location>
        <begin position="34"/>
        <end position="45"/>
    </location>
</feature>
<feature type="region of interest" description="Disordered" evidence="6">
    <location>
        <begin position="131"/>
        <end position="162"/>
    </location>
</feature>
<feature type="compositionally biased region" description="Pro residues" evidence="6">
    <location>
        <begin position="131"/>
        <end position="142"/>
    </location>
</feature>
<comment type="function">
    <text evidence="2 3">SOCS family proteins form part of a classical negative feedback system that regulates cytokine signal transduction. SOCS3 is involved in negative regulation of cytokines that signal through the JAK/STAT pathway. Inhibits cytokine signal transduction by binding to tyrosine kinase receptors including IL6ST/gp130, LIF, erythropoietin, insulin, IL12, GCSF and leptin receptors. Binding to JAK2 inhibits its kinase activity and regulates IL6 signaling. Suppresses fetal liver erythropoiesis. Regulates onset and maintenance of allergic responses mediated by T-helper type 2 cells (By similarity). Probable substrate recognition component of a SCF-like ECS (Elongin BC-CUL2/5-SOCS-box protein) E3 ubiquitin-protein ligase complex which mediates the ubiquitination and subsequent proteasomal degradation of target proteins (By similarity).</text>
</comment>
<comment type="pathway">
    <text>Protein modification; protein ubiquitination.</text>
</comment>
<comment type="subunit">
    <text evidence="2 3">Interacts with multiple activated proteins of the tyrosine kinase signaling pathway including IGF1 receptor, insulin receptor and JAK2. Binding to JAK2 is mediated through the KIR and SH2 domains to a phosphorylated tyrosine residue within the JAK2 JH1 domain. Binds specific activated tyrosine residues of the leptin, EPO, IL12, GSCF and gp130 receptors. Interaction with CSNK1E stabilizes SOCS3 protein. Component of the probable ECS(SOCS3) E3 ubiquitin-protein ligase complex which contains CUL5, RNF7/RBX2, Elongin BC complex and SOCS3. Interacts with CUL5, RNF7, ELOB and ELOC. Interacts with FGFR3. Interacts with INSR. Interacts with BCL10; this interaction may interfere with BCL10-binding with PELI2. Interacts with NOD2 (via CARD domain); the interaction promotes NOD2 degradation.</text>
</comment>
<comment type="domain">
    <text>The ESS and SH2 domains are required for JAK phosphotyrosine binding. Further interaction with the KIR domain is necessary for signal and kinase inhibition.</text>
</comment>
<comment type="domain">
    <text evidence="1">The SOCS box domain mediates the interaction with the Elongin BC complex, an adapter module in different E3 ubiquitin ligase complexes.</text>
</comment>
<comment type="PTM">
    <text evidence="1">Phosphorylated on tyrosine residues after stimulation by the cytokines, IL-2, EPO or IGF1.</text>
</comment>
<accession>Q68AM8</accession>
<gene>
    <name type="primary">SOCS3</name>
</gene>
<evidence type="ECO:0000250" key="1"/>
<evidence type="ECO:0000250" key="2">
    <source>
        <dbReference type="UniProtKB" id="O14543"/>
    </source>
</evidence>
<evidence type="ECO:0000250" key="3">
    <source>
        <dbReference type="UniProtKB" id="O35718"/>
    </source>
</evidence>
<evidence type="ECO:0000255" key="4">
    <source>
        <dbReference type="PROSITE-ProRule" id="PRU00191"/>
    </source>
</evidence>
<evidence type="ECO:0000255" key="5">
    <source>
        <dbReference type="PROSITE-ProRule" id="PRU00194"/>
    </source>
</evidence>
<evidence type="ECO:0000256" key="6">
    <source>
        <dbReference type="SAM" id="MobiDB-lite"/>
    </source>
</evidence>
<organism>
    <name type="scientific">Canis lupus familiaris</name>
    <name type="common">Dog</name>
    <name type="synonym">Canis familiaris</name>
    <dbReference type="NCBI Taxonomy" id="9615"/>
    <lineage>
        <taxon>Eukaryota</taxon>
        <taxon>Metazoa</taxon>
        <taxon>Chordata</taxon>
        <taxon>Craniata</taxon>
        <taxon>Vertebrata</taxon>
        <taxon>Euteleostomi</taxon>
        <taxon>Mammalia</taxon>
        <taxon>Eutheria</taxon>
        <taxon>Laurasiatheria</taxon>
        <taxon>Carnivora</taxon>
        <taxon>Caniformia</taxon>
        <taxon>Canidae</taxon>
        <taxon>Canis</taxon>
    </lineage>
</organism>
<sequence>MVTHSKFPAAGMSRPLDTSLRLKTFSSKSEYQLVVNAVCKLQESGFYWSAVTGGEANLLLSAEPAGTFLIRDSSDQRHFFTLSVKTQSGTKNLRIQCEGGSFSLQSDPRSTQPVPRFDCVLKLVHHYMPPPGAPSFPAPPTEPSSEVSEQPPSQPLPGNPPRRAYYIYSGGEKIPLVLSRPLSSNVATLQHLCRKTVNGHLDSYEKVTQLPGAIREFLDQYDAPL</sequence>
<name>SOCS3_CANLF</name>
<proteinExistence type="evidence at transcript level"/>
<dbReference type="EMBL" id="AB164434">
    <property type="protein sequence ID" value="BAD42435.1"/>
    <property type="molecule type" value="mRNA"/>
</dbReference>
<dbReference type="RefSeq" id="NP_001026801.1">
    <property type="nucleotide sequence ID" value="NM_001031631.1"/>
</dbReference>
<dbReference type="BMRB" id="Q68AM8"/>
<dbReference type="SMR" id="Q68AM8"/>
<dbReference type="FunCoup" id="Q68AM8">
    <property type="interactions" value="504"/>
</dbReference>
<dbReference type="PaxDb" id="9612-ENSCAFP00000007917"/>
<dbReference type="GeneID" id="442949"/>
<dbReference type="KEGG" id="cfa:442949"/>
<dbReference type="CTD" id="9021"/>
<dbReference type="eggNOG" id="KOG4566">
    <property type="taxonomic scope" value="Eukaryota"/>
</dbReference>
<dbReference type="InParanoid" id="Q68AM8"/>
<dbReference type="OrthoDB" id="6426624at2759"/>
<dbReference type="UniPathway" id="UPA00143"/>
<dbReference type="Proteomes" id="UP000002254">
    <property type="component" value="Unplaced"/>
</dbReference>
<dbReference type="Proteomes" id="UP000694429">
    <property type="component" value="Unplaced"/>
</dbReference>
<dbReference type="Proteomes" id="UP000694542">
    <property type="component" value="Unplaced"/>
</dbReference>
<dbReference type="Proteomes" id="UP000805418">
    <property type="component" value="Unplaced"/>
</dbReference>
<dbReference type="GO" id="GO:0005126">
    <property type="term" value="F:cytokine receptor binding"/>
    <property type="evidence" value="ECO:0000318"/>
    <property type="project" value="GO_Central"/>
</dbReference>
<dbReference type="GO" id="GO:0019221">
    <property type="term" value="P:cytokine-mediated signaling pathway"/>
    <property type="evidence" value="ECO:0000318"/>
    <property type="project" value="GO_Central"/>
</dbReference>
<dbReference type="GO" id="GO:0035556">
    <property type="term" value="P:intracellular signal transduction"/>
    <property type="evidence" value="ECO:0007669"/>
    <property type="project" value="InterPro"/>
</dbReference>
<dbReference type="GO" id="GO:0046426">
    <property type="term" value="P:negative regulation of receptor signaling pathway via JAK-STAT"/>
    <property type="evidence" value="ECO:0000318"/>
    <property type="project" value="GO_Central"/>
</dbReference>
<dbReference type="GO" id="GO:0016567">
    <property type="term" value="P:protein ubiquitination"/>
    <property type="evidence" value="ECO:0007669"/>
    <property type="project" value="UniProtKB-UniPathway"/>
</dbReference>
<dbReference type="CDD" id="cd10384">
    <property type="entry name" value="SH2_SOCS3"/>
    <property type="match status" value="1"/>
</dbReference>
<dbReference type="FunFam" id="3.30.505.10:FF:000066">
    <property type="entry name" value="suppressor of cytokine signaling 3"/>
    <property type="match status" value="1"/>
</dbReference>
<dbReference type="Gene3D" id="3.30.505.10">
    <property type="entry name" value="SH2 domain"/>
    <property type="match status" value="1"/>
</dbReference>
<dbReference type="Gene3D" id="1.10.750.20">
    <property type="entry name" value="SOCS box"/>
    <property type="match status" value="1"/>
</dbReference>
<dbReference type="InterPro" id="IPR000980">
    <property type="entry name" value="SH2"/>
</dbReference>
<dbReference type="InterPro" id="IPR036860">
    <property type="entry name" value="SH2_dom_sf"/>
</dbReference>
<dbReference type="InterPro" id="IPR035863">
    <property type="entry name" value="SOCS3_SH2"/>
</dbReference>
<dbReference type="InterPro" id="IPR001496">
    <property type="entry name" value="SOCS_box"/>
</dbReference>
<dbReference type="InterPro" id="IPR036036">
    <property type="entry name" value="SOCS_box-like_dom_sf"/>
</dbReference>
<dbReference type="PANTHER" id="PTHR10155">
    <property type="entry name" value="PHOSPHATIDYLINOSITOL 3-KINASE REGULATORY SUBUNIT"/>
    <property type="match status" value="1"/>
</dbReference>
<dbReference type="PANTHER" id="PTHR10155:SF11">
    <property type="entry name" value="SUPPRESSOR OF CYTOKINE SIGNALING 3"/>
    <property type="match status" value="1"/>
</dbReference>
<dbReference type="Pfam" id="PF00017">
    <property type="entry name" value="SH2"/>
    <property type="match status" value="1"/>
</dbReference>
<dbReference type="SMART" id="SM00252">
    <property type="entry name" value="SH2"/>
    <property type="match status" value="1"/>
</dbReference>
<dbReference type="SMART" id="SM00253">
    <property type="entry name" value="SOCS"/>
    <property type="match status" value="1"/>
</dbReference>
<dbReference type="SMART" id="SM00969">
    <property type="entry name" value="SOCS_box"/>
    <property type="match status" value="1"/>
</dbReference>
<dbReference type="SUPFAM" id="SSF55550">
    <property type="entry name" value="SH2 domain"/>
    <property type="match status" value="1"/>
</dbReference>
<dbReference type="SUPFAM" id="SSF158235">
    <property type="entry name" value="SOCS box-like"/>
    <property type="match status" value="1"/>
</dbReference>
<dbReference type="PROSITE" id="PS50001">
    <property type="entry name" value="SH2"/>
    <property type="match status" value="1"/>
</dbReference>
<dbReference type="PROSITE" id="PS50225">
    <property type="entry name" value="SOCS"/>
    <property type="match status" value="1"/>
</dbReference>
<protein>
    <recommendedName>
        <fullName>Suppressor of cytokine signaling 3</fullName>
        <shortName>SOCS-3</shortName>
    </recommendedName>
</protein>
<reference key="1">
    <citation type="submission" date="2004-03" db="EMBL/GenBank/DDBJ databases">
        <title>Expression analysis of suppressor of cytokine signaling 3 (SOCS3) gene in canine atopic dermatitis.</title>
        <authorList>
            <person name="Tsukui T."/>
            <person name="Sakaguchi M."/>
            <person name="Maeda S."/>
            <person name="Koyanagi M."/>
            <person name="Masuda K."/>
            <person name="Ohno K."/>
            <person name="Tsujimoto H."/>
            <person name="Iwabuchi S."/>
        </authorList>
    </citation>
    <scope>NUCLEOTIDE SEQUENCE [MRNA]</scope>
</reference>